<keyword id="KW-0067">ATP-binding</keyword>
<keyword id="KW-0436">Ligase</keyword>
<keyword id="KW-0547">Nucleotide-binding</keyword>
<keyword id="KW-0658">Purine biosynthesis</keyword>
<comment type="catalytic activity">
    <reaction evidence="1">
        <text>5-amino-1-(5-phospho-D-ribosyl)imidazole-4-carboxylate + L-aspartate + ATP = (2S)-2-[5-amino-1-(5-phospho-beta-D-ribosyl)imidazole-4-carboxamido]succinate + ADP + phosphate + 2 H(+)</text>
        <dbReference type="Rhea" id="RHEA:22628"/>
        <dbReference type="ChEBI" id="CHEBI:15378"/>
        <dbReference type="ChEBI" id="CHEBI:29991"/>
        <dbReference type="ChEBI" id="CHEBI:30616"/>
        <dbReference type="ChEBI" id="CHEBI:43474"/>
        <dbReference type="ChEBI" id="CHEBI:58443"/>
        <dbReference type="ChEBI" id="CHEBI:77657"/>
        <dbReference type="ChEBI" id="CHEBI:456216"/>
        <dbReference type="EC" id="6.3.2.6"/>
    </reaction>
</comment>
<comment type="pathway">
    <text evidence="1">Purine metabolism; IMP biosynthesis via de novo pathway; 5-amino-1-(5-phospho-D-ribosyl)imidazole-4-carboxamide from 5-amino-1-(5-phospho-D-ribosyl)imidazole-4-carboxylate: step 1/2.</text>
</comment>
<comment type="similarity">
    <text evidence="1">Belongs to the SAICAR synthetase family.</text>
</comment>
<reference key="1">
    <citation type="submission" date="2008-02" db="EMBL/GenBank/DDBJ databases">
        <title>Complete sequence of Pseudomonas putida W619.</title>
        <authorList>
            <person name="Copeland A."/>
            <person name="Lucas S."/>
            <person name="Lapidus A."/>
            <person name="Barry K."/>
            <person name="Detter J.C."/>
            <person name="Glavina del Rio T."/>
            <person name="Dalin E."/>
            <person name="Tice H."/>
            <person name="Pitluck S."/>
            <person name="Chain P."/>
            <person name="Malfatti S."/>
            <person name="Shin M."/>
            <person name="Vergez L."/>
            <person name="Schmutz J."/>
            <person name="Larimer F."/>
            <person name="Land M."/>
            <person name="Hauser L."/>
            <person name="Kyrpides N."/>
            <person name="Kim E."/>
            <person name="Taghavi S."/>
            <person name="Vangronsveld D."/>
            <person name="van der Lelie D."/>
            <person name="Richardson P."/>
        </authorList>
    </citation>
    <scope>NUCLEOTIDE SEQUENCE [LARGE SCALE GENOMIC DNA]</scope>
    <source>
        <strain>W619</strain>
    </source>
</reference>
<feature type="chain" id="PRO_1000096005" description="Phosphoribosylaminoimidazole-succinocarboxamide synthase">
    <location>
        <begin position="1"/>
        <end position="236"/>
    </location>
</feature>
<proteinExistence type="inferred from homology"/>
<accession>B1JDB4</accession>
<sequence length="236" mass="26915">MEKREELYRGKAKSVYKTDDADRLILLFRNDTSAFDGKRIEQLDRKGMVNNKFNAFIMQKLEEAGVPTQFDKLLGDNECLVKKLDMIPVECVVRNYAAGSLVKRLGVEEGIKLEPSTFELFLKNDEKGDPFINESHVVAFGWGTAEQLAEMKKLSLKVNEVLNKLFDDAGLLLVDFKLEFGVFHGQIVLGDEFSPDGCRLWDKETRKKMDKDRFRQGLGDVIEAYEEVAKRLGVPL</sequence>
<organism>
    <name type="scientific">Pseudomonas putida (strain W619)</name>
    <dbReference type="NCBI Taxonomy" id="390235"/>
    <lineage>
        <taxon>Bacteria</taxon>
        <taxon>Pseudomonadati</taxon>
        <taxon>Pseudomonadota</taxon>
        <taxon>Gammaproteobacteria</taxon>
        <taxon>Pseudomonadales</taxon>
        <taxon>Pseudomonadaceae</taxon>
        <taxon>Pseudomonas</taxon>
    </lineage>
</organism>
<name>PUR7_PSEPW</name>
<gene>
    <name evidence="1" type="primary">purC</name>
    <name type="ordered locus">PputW619_3972</name>
</gene>
<protein>
    <recommendedName>
        <fullName evidence="1">Phosphoribosylaminoimidazole-succinocarboxamide synthase</fullName>
        <ecNumber evidence="1">6.3.2.6</ecNumber>
    </recommendedName>
    <alternativeName>
        <fullName evidence="1">SAICAR synthetase</fullName>
    </alternativeName>
</protein>
<dbReference type="EC" id="6.3.2.6" evidence="1"/>
<dbReference type="EMBL" id="CP000949">
    <property type="protein sequence ID" value="ACA74452.1"/>
    <property type="molecule type" value="Genomic_DNA"/>
</dbReference>
<dbReference type="SMR" id="B1JDB4"/>
<dbReference type="STRING" id="390235.PputW619_3972"/>
<dbReference type="KEGG" id="ppw:PputW619_3972"/>
<dbReference type="eggNOG" id="COG0152">
    <property type="taxonomic scope" value="Bacteria"/>
</dbReference>
<dbReference type="HOGENOM" id="CLU_061495_2_0_6"/>
<dbReference type="OrthoDB" id="9801549at2"/>
<dbReference type="UniPathway" id="UPA00074">
    <property type="reaction ID" value="UER00131"/>
</dbReference>
<dbReference type="GO" id="GO:0005829">
    <property type="term" value="C:cytosol"/>
    <property type="evidence" value="ECO:0007669"/>
    <property type="project" value="TreeGrafter"/>
</dbReference>
<dbReference type="GO" id="GO:0005524">
    <property type="term" value="F:ATP binding"/>
    <property type="evidence" value="ECO:0007669"/>
    <property type="project" value="UniProtKB-KW"/>
</dbReference>
<dbReference type="GO" id="GO:0004639">
    <property type="term" value="F:phosphoribosylaminoimidazolesuccinocarboxamide synthase activity"/>
    <property type="evidence" value="ECO:0007669"/>
    <property type="project" value="UniProtKB-UniRule"/>
</dbReference>
<dbReference type="GO" id="GO:0006189">
    <property type="term" value="P:'de novo' IMP biosynthetic process"/>
    <property type="evidence" value="ECO:0007669"/>
    <property type="project" value="UniProtKB-UniRule"/>
</dbReference>
<dbReference type="GO" id="GO:0009236">
    <property type="term" value="P:cobalamin biosynthetic process"/>
    <property type="evidence" value="ECO:0007669"/>
    <property type="project" value="InterPro"/>
</dbReference>
<dbReference type="CDD" id="cd01415">
    <property type="entry name" value="SAICAR_synt_PurC"/>
    <property type="match status" value="1"/>
</dbReference>
<dbReference type="FunFam" id="3.30.200.20:FF:000086">
    <property type="entry name" value="Phosphoribosylaminoimidazole-succinocarboxamide synthase"/>
    <property type="match status" value="1"/>
</dbReference>
<dbReference type="FunFam" id="3.30.470.20:FF:000006">
    <property type="entry name" value="Phosphoribosylaminoimidazole-succinocarboxamide synthase"/>
    <property type="match status" value="1"/>
</dbReference>
<dbReference type="Gene3D" id="3.30.470.20">
    <property type="entry name" value="ATP-grasp fold, B domain"/>
    <property type="match status" value="1"/>
</dbReference>
<dbReference type="Gene3D" id="3.30.200.20">
    <property type="entry name" value="Phosphorylase Kinase, domain 1"/>
    <property type="match status" value="1"/>
</dbReference>
<dbReference type="HAMAP" id="MF_00137">
    <property type="entry name" value="SAICAR_synth"/>
    <property type="match status" value="1"/>
</dbReference>
<dbReference type="InterPro" id="IPR028923">
    <property type="entry name" value="SAICAR_synt/ADE2_N"/>
</dbReference>
<dbReference type="InterPro" id="IPR033934">
    <property type="entry name" value="SAICAR_synt_PurC"/>
</dbReference>
<dbReference type="InterPro" id="IPR001636">
    <property type="entry name" value="SAICAR_synth"/>
</dbReference>
<dbReference type="InterPro" id="IPR050089">
    <property type="entry name" value="SAICAR_synthetase"/>
</dbReference>
<dbReference type="InterPro" id="IPR018236">
    <property type="entry name" value="SAICAR_synthetase_CS"/>
</dbReference>
<dbReference type="NCBIfam" id="TIGR00081">
    <property type="entry name" value="purC"/>
    <property type="match status" value="1"/>
</dbReference>
<dbReference type="PANTHER" id="PTHR43599">
    <property type="entry name" value="MULTIFUNCTIONAL PROTEIN ADE2"/>
    <property type="match status" value="1"/>
</dbReference>
<dbReference type="PANTHER" id="PTHR43599:SF3">
    <property type="entry name" value="SI:DKEY-6E2.2"/>
    <property type="match status" value="1"/>
</dbReference>
<dbReference type="Pfam" id="PF01259">
    <property type="entry name" value="SAICAR_synt"/>
    <property type="match status" value="1"/>
</dbReference>
<dbReference type="SUPFAM" id="SSF56104">
    <property type="entry name" value="SAICAR synthase-like"/>
    <property type="match status" value="1"/>
</dbReference>
<dbReference type="PROSITE" id="PS01057">
    <property type="entry name" value="SAICAR_SYNTHETASE_1"/>
    <property type="match status" value="1"/>
</dbReference>
<dbReference type="PROSITE" id="PS01058">
    <property type="entry name" value="SAICAR_SYNTHETASE_2"/>
    <property type="match status" value="1"/>
</dbReference>
<evidence type="ECO:0000255" key="1">
    <source>
        <dbReference type="HAMAP-Rule" id="MF_00137"/>
    </source>
</evidence>